<keyword id="KW-0067">ATP-binding</keyword>
<keyword id="KW-0143">Chaperone</keyword>
<keyword id="KW-0903">Direct protein sequencing</keyword>
<keyword id="KW-0547">Nucleotide-binding</keyword>
<keyword id="KW-0597">Phosphoprotein</keyword>
<keyword id="KW-0346">Stress response</keyword>
<organism>
    <name type="scientific">Anabaena sp. (strain L31)</name>
    <dbReference type="NCBI Taxonomy" id="29412"/>
    <lineage>
        <taxon>Bacteria</taxon>
        <taxon>Bacillati</taxon>
        <taxon>Cyanobacteriota</taxon>
        <taxon>Cyanophyceae</taxon>
        <taxon>Nostocales</taxon>
        <taxon>Nostocaceae</taxon>
        <taxon>Anabaena</taxon>
    </lineage>
</organism>
<dbReference type="GO" id="GO:0005524">
    <property type="term" value="F:ATP binding"/>
    <property type="evidence" value="ECO:0007669"/>
    <property type="project" value="UniProtKB-KW"/>
</dbReference>
<dbReference type="GO" id="GO:0140662">
    <property type="term" value="F:ATP-dependent protein folding chaperone"/>
    <property type="evidence" value="ECO:0007669"/>
    <property type="project" value="InterPro"/>
</dbReference>
<dbReference type="Gene3D" id="3.30.420.40">
    <property type="match status" value="1"/>
</dbReference>
<dbReference type="InterPro" id="IPR013126">
    <property type="entry name" value="Hsp_70_fam"/>
</dbReference>
<dbReference type="Pfam" id="PF00012">
    <property type="entry name" value="HSP70"/>
    <property type="match status" value="1"/>
</dbReference>
<comment type="function">
    <text evidence="1">Acts as a chaperone.</text>
</comment>
<comment type="induction">
    <text evidence="3">By heat shock. Acts as an early heat shock protein, induced within, and reaches a maximum by, 5 to 15 minutes of the start of heat stress. Levels decrease over time.</text>
</comment>
<comment type="miscellaneous">
    <text>On the 2D-gel the determined pI of this protein is: 4.7, its MW is: 70 kDa.</text>
</comment>
<comment type="similarity">
    <text evidence="2">Belongs to the heat shock protein 70 family.</text>
</comment>
<name>DNAK_ANASL</name>
<accession>P86175</accession>
<sequence>QAVMNPENTFYSVKRIINEPTAASLAYGFDKK</sequence>
<reference evidence="4" key="1">
    <citation type="submission" date="2008-12" db="UniProtKB">
        <authorList>
            <person name="Rajaram H."/>
            <person name="Apte S.K."/>
        </authorList>
    </citation>
    <scope>PROTEIN SEQUENCE</scope>
</reference>
<reference evidence="4" key="2">
    <citation type="journal article" date="2003" name="Arch. Microbiol.">
        <title>Heat-shock response and its contribution to thermotolerance of the nitrogen-fixing cyanobacterium Anabaena sp. strain L-31.</title>
        <authorList>
            <person name="Rajaram H."/>
            <person name="Apte S.K."/>
        </authorList>
    </citation>
    <scope>INDUCTION</scope>
</reference>
<evidence type="ECO:0000250" key="1">
    <source>
        <dbReference type="UniProtKB" id="Q8YW74"/>
    </source>
</evidence>
<evidence type="ECO:0000255" key="2"/>
<evidence type="ECO:0000269" key="3">
    <source>
    </source>
</evidence>
<evidence type="ECO:0000305" key="4"/>
<proteinExistence type="evidence at protein level"/>
<gene>
    <name evidence="1" type="primary">dnaK</name>
</gene>
<protein>
    <recommendedName>
        <fullName>Chaperone protein DnaK</fullName>
    </recommendedName>
    <alternativeName>
        <fullName evidence="1">HSP70</fullName>
    </alternativeName>
    <alternativeName>
        <fullName evidence="1">Heat shock 70 kDa protein</fullName>
    </alternativeName>
    <alternativeName>
        <fullName evidence="1">Heat shock protein 70</fullName>
    </alternativeName>
</protein>
<feature type="chain" id="PRO_0000366197" description="Chaperone protein DnaK">
    <location>
        <begin position="1" status="less than"/>
        <end position="32" status="greater than"/>
    </location>
</feature>
<feature type="non-consecutive residues" evidence="4">
    <location>
        <begin position="15"/>
        <end position="16"/>
    </location>
</feature>
<feature type="non-terminal residue">
    <location>
        <position position="1"/>
    </location>
</feature>
<feature type="non-terminal residue">
    <location>
        <position position="32"/>
    </location>
</feature>